<keyword id="KW-0007">Acetylation</keyword>
<keyword id="KW-0158">Chromosome</keyword>
<keyword id="KW-0963">Cytoplasm</keyword>
<keyword id="KW-0226">DNA condensation</keyword>
<keyword id="KW-0238">DNA-binding</keyword>
<keyword id="KW-1185">Reference proteome</keyword>
<comment type="function">
    <text evidence="1">Binds double-stranded DNA tightly but without sequence specificity. Involved in DNA compaction.</text>
</comment>
<comment type="subcellular location">
    <subcellularLocation>
        <location evidence="1">Cytoplasm</location>
    </subcellularLocation>
    <subcellularLocation>
        <location evidence="1">Chromosome</location>
    </subcellularLocation>
</comment>
<comment type="PTM">
    <text evidence="1">Acetylated. Acetylation at Lys-15 decreases DNA-binding affinity.</text>
</comment>
<comment type="similarity">
    <text evidence="1">Belongs to the histone-like Alba family.</text>
</comment>
<evidence type="ECO:0000255" key="1">
    <source>
        <dbReference type="HAMAP-Rule" id="MF_01122"/>
    </source>
</evidence>
<protein>
    <recommendedName>
        <fullName evidence="1">DNA/RNA-binding protein Alba</fullName>
    </recommendedName>
</protein>
<dbReference type="EMBL" id="CP000816">
    <property type="protein sequence ID" value="ABU81358.1"/>
    <property type="molecule type" value="Genomic_DNA"/>
</dbReference>
<dbReference type="RefSeq" id="WP_011998210.1">
    <property type="nucleotide sequence ID" value="NC_009776.1"/>
</dbReference>
<dbReference type="SMR" id="A8A8V6"/>
<dbReference type="STRING" id="453591.Igni_0174"/>
<dbReference type="GeneID" id="5562396"/>
<dbReference type="KEGG" id="iho:Igni_0174"/>
<dbReference type="eggNOG" id="arCOG01753">
    <property type="taxonomic scope" value="Archaea"/>
</dbReference>
<dbReference type="HOGENOM" id="CLU_110989_1_0_2"/>
<dbReference type="OrthoDB" id="10360at2157"/>
<dbReference type="PhylomeDB" id="A8A8V6"/>
<dbReference type="Proteomes" id="UP000000262">
    <property type="component" value="Chromosome"/>
</dbReference>
<dbReference type="GO" id="GO:0005694">
    <property type="term" value="C:chromosome"/>
    <property type="evidence" value="ECO:0007669"/>
    <property type="project" value="UniProtKB-SubCell"/>
</dbReference>
<dbReference type="GO" id="GO:0005737">
    <property type="term" value="C:cytoplasm"/>
    <property type="evidence" value="ECO:0007669"/>
    <property type="project" value="UniProtKB-SubCell"/>
</dbReference>
<dbReference type="GO" id="GO:0003690">
    <property type="term" value="F:double-stranded DNA binding"/>
    <property type="evidence" value="ECO:0007669"/>
    <property type="project" value="UniProtKB-UniRule"/>
</dbReference>
<dbReference type="GO" id="GO:0003723">
    <property type="term" value="F:RNA binding"/>
    <property type="evidence" value="ECO:0007669"/>
    <property type="project" value="InterPro"/>
</dbReference>
<dbReference type="GO" id="GO:0030261">
    <property type="term" value="P:chromosome condensation"/>
    <property type="evidence" value="ECO:0007669"/>
    <property type="project" value="UniProtKB-KW"/>
</dbReference>
<dbReference type="Gene3D" id="3.30.110.20">
    <property type="entry name" value="Alba-like domain"/>
    <property type="match status" value="1"/>
</dbReference>
<dbReference type="HAMAP" id="MF_01122">
    <property type="entry name" value="AlbA"/>
    <property type="match status" value="1"/>
</dbReference>
<dbReference type="InterPro" id="IPR036882">
    <property type="entry name" value="Alba-like_dom_sf"/>
</dbReference>
<dbReference type="InterPro" id="IPR013795">
    <property type="entry name" value="DNA/RNA-bd_Alba"/>
</dbReference>
<dbReference type="InterPro" id="IPR002775">
    <property type="entry name" value="DNA/RNA-bd_Alba-like"/>
</dbReference>
<dbReference type="NCBIfam" id="TIGR00285">
    <property type="entry name" value="DNA-binding protein Alba"/>
    <property type="match status" value="1"/>
</dbReference>
<dbReference type="NCBIfam" id="NF003088">
    <property type="entry name" value="PRK04015.1"/>
    <property type="match status" value="1"/>
</dbReference>
<dbReference type="Pfam" id="PF01918">
    <property type="entry name" value="Alba"/>
    <property type="match status" value="1"/>
</dbReference>
<dbReference type="PIRSF" id="PIRSF028732">
    <property type="entry name" value="Alba"/>
    <property type="match status" value="1"/>
</dbReference>
<dbReference type="SUPFAM" id="SSF82704">
    <property type="entry name" value="AlbA-like"/>
    <property type="match status" value="1"/>
</dbReference>
<sequence length="97" mass="10711">MAAQIPQSNEVRVGKKPVMNYVLATLTLLNQGVDRIEIKARGRAISKAVDTVEIVRNRFLPGQVRVAEIRIGSQTVTSADGRQSRISTIDIVLERVK</sequence>
<reference key="1">
    <citation type="journal article" date="2008" name="Genome Biol.">
        <title>A genomic analysis of the archaeal system Ignicoccus hospitalis-Nanoarchaeum equitans.</title>
        <authorList>
            <person name="Podar M."/>
            <person name="Anderson I."/>
            <person name="Makarova K.S."/>
            <person name="Elkins J.G."/>
            <person name="Ivanova N."/>
            <person name="Wall M.A."/>
            <person name="Lykidis A."/>
            <person name="Mavromatis K."/>
            <person name="Sun H."/>
            <person name="Hudson M.E."/>
            <person name="Chen W."/>
            <person name="Deciu C."/>
            <person name="Hutchison D."/>
            <person name="Eads J.R."/>
            <person name="Anderson A."/>
            <person name="Fernandes F."/>
            <person name="Szeto E."/>
            <person name="Lapidus A."/>
            <person name="Kyrpides N.C."/>
            <person name="Saier M.H. Jr."/>
            <person name="Richardson P.M."/>
            <person name="Rachel R."/>
            <person name="Huber H."/>
            <person name="Eisen J.A."/>
            <person name="Koonin E.V."/>
            <person name="Keller M."/>
            <person name="Stetter K.O."/>
        </authorList>
    </citation>
    <scope>NUCLEOTIDE SEQUENCE [LARGE SCALE GENOMIC DNA]</scope>
    <source>
        <strain>KIN4/I / DSM 18386 / JCM 14125</strain>
    </source>
</reference>
<name>ALBA_IGNH4</name>
<feature type="chain" id="PRO_1000073037" description="DNA/RNA-binding protein Alba">
    <location>
        <begin position="1"/>
        <end position="97"/>
    </location>
</feature>
<feature type="modified residue" description="N6-acetyllysine" evidence="1">
    <location>
        <position position="15"/>
    </location>
</feature>
<proteinExistence type="inferred from homology"/>
<gene>
    <name evidence="1" type="primary">albA</name>
    <name type="ordered locus">Igni_0174</name>
</gene>
<accession>A8A8V6</accession>
<organism>
    <name type="scientific">Ignicoccus hospitalis (strain KIN4/I / DSM 18386 / JCM 14125)</name>
    <dbReference type="NCBI Taxonomy" id="453591"/>
    <lineage>
        <taxon>Archaea</taxon>
        <taxon>Thermoproteota</taxon>
        <taxon>Thermoprotei</taxon>
        <taxon>Desulfurococcales</taxon>
        <taxon>Desulfurococcaceae</taxon>
        <taxon>Ignicoccus</taxon>
    </lineage>
</organism>